<sequence>MSKFQLEQMLRAGVHFGHLARRWSPKMKPYIFMEKNGVHIIDLKKTLVMADEALKAIEAIASTGREIMLVGTKKQAKVIIAEQAERAGMPYVCERWLGGMLTNFSTIRQSIRRMNAIDRMETDGTFDMITKKERLMLLREKDKLVRILGGIANMNRLPAALFVVDIKKEHIAIKEARSLGIPIFAMVDTNCDPDEVDYIIPANDDAIRSIELMVKAVADTIIEARSLQEEQEAIAEMDEQVEEDAEEASND</sequence>
<proteinExistence type="inferred from homology"/>
<gene>
    <name evidence="1" type="primary">rpsB</name>
    <name type="ordered locus">Cpar_0425</name>
</gene>
<dbReference type="EMBL" id="CP001099">
    <property type="protein sequence ID" value="ACF10847.1"/>
    <property type="molecule type" value="Genomic_DNA"/>
</dbReference>
<dbReference type="RefSeq" id="WP_012501680.1">
    <property type="nucleotide sequence ID" value="NC_011027.1"/>
</dbReference>
<dbReference type="SMR" id="B3QLF7"/>
<dbReference type="STRING" id="517417.Cpar_0425"/>
<dbReference type="KEGG" id="cpc:Cpar_0425"/>
<dbReference type="eggNOG" id="COG0052">
    <property type="taxonomic scope" value="Bacteria"/>
</dbReference>
<dbReference type="HOGENOM" id="CLU_040318_1_3_10"/>
<dbReference type="Proteomes" id="UP000008811">
    <property type="component" value="Chromosome"/>
</dbReference>
<dbReference type="GO" id="GO:0022627">
    <property type="term" value="C:cytosolic small ribosomal subunit"/>
    <property type="evidence" value="ECO:0007669"/>
    <property type="project" value="TreeGrafter"/>
</dbReference>
<dbReference type="GO" id="GO:0003735">
    <property type="term" value="F:structural constituent of ribosome"/>
    <property type="evidence" value="ECO:0007669"/>
    <property type="project" value="InterPro"/>
</dbReference>
<dbReference type="GO" id="GO:0006412">
    <property type="term" value="P:translation"/>
    <property type="evidence" value="ECO:0007669"/>
    <property type="project" value="UniProtKB-UniRule"/>
</dbReference>
<dbReference type="CDD" id="cd01425">
    <property type="entry name" value="RPS2"/>
    <property type="match status" value="1"/>
</dbReference>
<dbReference type="FunFam" id="1.10.287.610:FF:000001">
    <property type="entry name" value="30S ribosomal protein S2"/>
    <property type="match status" value="1"/>
</dbReference>
<dbReference type="Gene3D" id="3.40.50.10490">
    <property type="entry name" value="Glucose-6-phosphate isomerase like protein, domain 1"/>
    <property type="match status" value="1"/>
</dbReference>
<dbReference type="Gene3D" id="1.10.287.610">
    <property type="entry name" value="Helix hairpin bin"/>
    <property type="match status" value="1"/>
</dbReference>
<dbReference type="HAMAP" id="MF_00291_B">
    <property type="entry name" value="Ribosomal_uS2_B"/>
    <property type="match status" value="1"/>
</dbReference>
<dbReference type="InterPro" id="IPR001865">
    <property type="entry name" value="Ribosomal_uS2"/>
</dbReference>
<dbReference type="InterPro" id="IPR005706">
    <property type="entry name" value="Ribosomal_uS2_bac/mit/plastid"/>
</dbReference>
<dbReference type="InterPro" id="IPR018130">
    <property type="entry name" value="Ribosomal_uS2_CS"/>
</dbReference>
<dbReference type="InterPro" id="IPR023591">
    <property type="entry name" value="Ribosomal_uS2_flav_dom_sf"/>
</dbReference>
<dbReference type="NCBIfam" id="TIGR01011">
    <property type="entry name" value="rpsB_bact"/>
    <property type="match status" value="1"/>
</dbReference>
<dbReference type="PANTHER" id="PTHR12534">
    <property type="entry name" value="30S RIBOSOMAL PROTEIN S2 PROKARYOTIC AND ORGANELLAR"/>
    <property type="match status" value="1"/>
</dbReference>
<dbReference type="PANTHER" id="PTHR12534:SF0">
    <property type="entry name" value="SMALL RIBOSOMAL SUBUNIT PROTEIN US2M"/>
    <property type="match status" value="1"/>
</dbReference>
<dbReference type="Pfam" id="PF00318">
    <property type="entry name" value="Ribosomal_S2"/>
    <property type="match status" value="1"/>
</dbReference>
<dbReference type="PRINTS" id="PR00395">
    <property type="entry name" value="RIBOSOMALS2"/>
</dbReference>
<dbReference type="SUPFAM" id="SSF52313">
    <property type="entry name" value="Ribosomal protein S2"/>
    <property type="match status" value="1"/>
</dbReference>
<dbReference type="PROSITE" id="PS00962">
    <property type="entry name" value="RIBOSOMAL_S2_1"/>
    <property type="match status" value="1"/>
</dbReference>
<dbReference type="PROSITE" id="PS00963">
    <property type="entry name" value="RIBOSOMAL_S2_2"/>
    <property type="match status" value="1"/>
</dbReference>
<protein>
    <recommendedName>
        <fullName evidence="1">Small ribosomal subunit protein uS2</fullName>
    </recommendedName>
    <alternativeName>
        <fullName evidence="3">30S ribosomal protein S2</fullName>
    </alternativeName>
</protein>
<evidence type="ECO:0000255" key="1">
    <source>
        <dbReference type="HAMAP-Rule" id="MF_00291"/>
    </source>
</evidence>
<evidence type="ECO:0000256" key="2">
    <source>
        <dbReference type="SAM" id="MobiDB-lite"/>
    </source>
</evidence>
<evidence type="ECO:0000305" key="3"/>
<reference key="1">
    <citation type="submission" date="2008-06" db="EMBL/GenBank/DDBJ databases">
        <title>Complete sequence of Chlorobaculum parvum NCIB 8327.</title>
        <authorList>
            <consortium name="US DOE Joint Genome Institute"/>
            <person name="Lucas S."/>
            <person name="Copeland A."/>
            <person name="Lapidus A."/>
            <person name="Glavina del Rio T."/>
            <person name="Dalin E."/>
            <person name="Tice H."/>
            <person name="Bruce D."/>
            <person name="Goodwin L."/>
            <person name="Pitluck S."/>
            <person name="Schmutz J."/>
            <person name="Larimer F."/>
            <person name="Land M."/>
            <person name="Hauser L."/>
            <person name="Kyrpides N."/>
            <person name="Mikhailova N."/>
            <person name="Zhao F."/>
            <person name="Li T."/>
            <person name="Liu Z."/>
            <person name="Overmann J."/>
            <person name="Bryant D.A."/>
            <person name="Richardson P."/>
        </authorList>
    </citation>
    <scope>NUCLEOTIDE SEQUENCE [LARGE SCALE GENOMIC DNA]</scope>
    <source>
        <strain>DSM 263 / NCIMB 8327</strain>
    </source>
</reference>
<keyword id="KW-0687">Ribonucleoprotein</keyword>
<keyword id="KW-0689">Ribosomal protein</keyword>
<feature type="chain" id="PRO_1000115003" description="Small ribosomal subunit protein uS2">
    <location>
        <begin position="1"/>
        <end position="251"/>
    </location>
</feature>
<feature type="region of interest" description="Disordered" evidence="2">
    <location>
        <begin position="232"/>
        <end position="251"/>
    </location>
</feature>
<comment type="similarity">
    <text evidence="1">Belongs to the universal ribosomal protein uS2 family.</text>
</comment>
<organism>
    <name type="scientific">Chlorobaculum parvum (strain DSM 263 / NCIMB 8327)</name>
    <name type="common">Chlorobium vibrioforme subsp. thiosulfatophilum</name>
    <dbReference type="NCBI Taxonomy" id="517417"/>
    <lineage>
        <taxon>Bacteria</taxon>
        <taxon>Pseudomonadati</taxon>
        <taxon>Chlorobiota</taxon>
        <taxon>Chlorobiia</taxon>
        <taxon>Chlorobiales</taxon>
        <taxon>Chlorobiaceae</taxon>
        <taxon>Chlorobaculum</taxon>
    </lineage>
</organism>
<accession>B3QLF7</accession>
<name>RS2_CHLP8</name>